<dbReference type="EMBL" id="L06805">
    <property type="protein sequence ID" value="AAA33201.1"/>
    <property type="status" value="ALT_FRAME"/>
    <property type="molecule type" value="Genomic_DNA"/>
</dbReference>
<dbReference type="EMBL" id="AAFI02000120">
    <property type="protein sequence ID" value="EAL63071.1"/>
    <property type="molecule type" value="Genomic_DNA"/>
</dbReference>
<dbReference type="PIR" id="S33760">
    <property type="entry name" value="S33760"/>
</dbReference>
<dbReference type="RefSeq" id="XP_636580.1">
    <property type="nucleotide sequence ID" value="XM_631488.1"/>
</dbReference>
<dbReference type="PDB" id="1LKX">
    <property type="method" value="X-ray"/>
    <property type="resolution" value="3.00 A"/>
    <property type="chains" value="A/B/C/D=1-697"/>
</dbReference>
<dbReference type="PDB" id="4A7F">
    <property type="method" value="EM"/>
    <property type="resolution" value="7.70 A"/>
    <property type="chains" value="C/G/J=1-697"/>
</dbReference>
<dbReference type="PDB" id="4A7H">
    <property type="method" value="EM"/>
    <property type="resolution" value="7.80 A"/>
    <property type="chains" value="C/I/J=1-697"/>
</dbReference>
<dbReference type="PDB" id="4A7L">
    <property type="method" value="EM"/>
    <property type="resolution" value="8.10 A"/>
    <property type="chains" value="C/G/J=1-697"/>
</dbReference>
<dbReference type="PDBsum" id="1LKX"/>
<dbReference type="PDBsum" id="4A7F"/>
<dbReference type="PDBsum" id="4A7H"/>
<dbReference type="PDBsum" id="4A7L"/>
<dbReference type="SMR" id="Q03479"/>
<dbReference type="FunCoup" id="Q03479">
    <property type="interactions" value="29"/>
</dbReference>
<dbReference type="STRING" id="44689.Q03479"/>
<dbReference type="PaxDb" id="44689-DDB0216200"/>
<dbReference type="EnsemblProtists" id="EAL63071">
    <property type="protein sequence ID" value="EAL63071"/>
    <property type="gene ID" value="DDB_G0288679"/>
</dbReference>
<dbReference type="GeneID" id="8626753"/>
<dbReference type="KEGG" id="ddi:DDB_G0288679"/>
<dbReference type="dictyBase" id="DDB_G0288679">
    <property type="gene designation" value="myoE"/>
</dbReference>
<dbReference type="VEuPathDB" id="AmoebaDB:DDB_G0288679"/>
<dbReference type="eggNOG" id="KOG0164">
    <property type="taxonomic scope" value="Eukaryota"/>
</dbReference>
<dbReference type="HOGENOM" id="CLU_000192_7_7_1"/>
<dbReference type="InParanoid" id="Q03479"/>
<dbReference type="OMA" id="AENIEWE"/>
<dbReference type="PhylomeDB" id="Q03479"/>
<dbReference type="EvolutionaryTrace" id="Q03479"/>
<dbReference type="PRO" id="PR:Q03479"/>
<dbReference type="Proteomes" id="UP000002195">
    <property type="component" value="Chromosome 5"/>
</dbReference>
<dbReference type="GO" id="GO:0015629">
    <property type="term" value="C:actin cytoskeleton"/>
    <property type="evidence" value="ECO:0000318"/>
    <property type="project" value="GO_Central"/>
</dbReference>
<dbReference type="GO" id="GO:0062201">
    <property type="term" value="C:actin wave"/>
    <property type="evidence" value="ECO:0000314"/>
    <property type="project" value="dictyBase"/>
</dbReference>
<dbReference type="GO" id="GO:0031252">
    <property type="term" value="C:cell leading edge"/>
    <property type="evidence" value="ECO:0000314"/>
    <property type="project" value="dictyBase"/>
</dbReference>
<dbReference type="GO" id="GO:0005737">
    <property type="term" value="C:cytoplasm"/>
    <property type="evidence" value="ECO:0000318"/>
    <property type="project" value="GO_Central"/>
</dbReference>
<dbReference type="GO" id="GO:0005829">
    <property type="term" value="C:cytosol"/>
    <property type="evidence" value="ECO:0000314"/>
    <property type="project" value="dictyBase"/>
</dbReference>
<dbReference type="GO" id="GO:0032009">
    <property type="term" value="C:early phagosome"/>
    <property type="evidence" value="ECO:0000314"/>
    <property type="project" value="dictyBase"/>
</dbReference>
<dbReference type="GO" id="GO:0031256">
    <property type="term" value="C:leading edge membrane"/>
    <property type="evidence" value="ECO:0000314"/>
    <property type="project" value="dictyBase"/>
</dbReference>
<dbReference type="GO" id="GO:0070685">
    <property type="term" value="C:macropinocytic cup"/>
    <property type="evidence" value="ECO:0000314"/>
    <property type="project" value="dictyBase"/>
</dbReference>
<dbReference type="GO" id="GO:0070687">
    <property type="term" value="C:macropinocytic cup cytoskeleton"/>
    <property type="evidence" value="ECO:0000314"/>
    <property type="project" value="dictyBase"/>
</dbReference>
<dbReference type="GO" id="GO:0070686">
    <property type="term" value="C:macropinocytic cup membrane"/>
    <property type="evidence" value="ECO:0000314"/>
    <property type="project" value="dictyBase"/>
</dbReference>
<dbReference type="GO" id="GO:0016459">
    <property type="term" value="C:myosin complex"/>
    <property type="evidence" value="ECO:0007669"/>
    <property type="project" value="UniProtKB-KW"/>
</dbReference>
<dbReference type="GO" id="GO:0001891">
    <property type="term" value="C:phagocytic cup"/>
    <property type="evidence" value="ECO:0000314"/>
    <property type="project" value="dictyBase"/>
</dbReference>
<dbReference type="GO" id="GO:0005886">
    <property type="term" value="C:plasma membrane"/>
    <property type="evidence" value="ECO:0000314"/>
    <property type="project" value="dictyBase"/>
</dbReference>
<dbReference type="GO" id="GO:0031143">
    <property type="term" value="C:pseudopodium"/>
    <property type="evidence" value="ECO:0000314"/>
    <property type="project" value="dictyBase"/>
</dbReference>
<dbReference type="GO" id="GO:0031260">
    <property type="term" value="C:pseudopodium membrane"/>
    <property type="evidence" value="ECO:0000314"/>
    <property type="project" value="dictyBase"/>
</dbReference>
<dbReference type="GO" id="GO:0003779">
    <property type="term" value="F:actin binding"/>
    <property type="evidence" value="ECO:0000314"/>
    <property type="project" value="dictyBase"/>
</dbReference>
<dbReference type="GO" id="GO:0051015">
    <property type="term" value="F:actin filament binding"/>
    <property type="evidence" value="ECO:0000318"/>
    <property type="project" value="GO_Central"/>
</dbReference>
<dbReference type="GO" id="GO:0005524">
    <property type="term" value="F:ATP binding"/>
    <property type="evidence" value="ECO:0000314"/>
    <property type="project" value="dictyBase"/>
</dbReference>
<dbReference type="GO" id="GO:0005516">
    <property type="term" value="F:calmodulin binding"/>
    <property type="evidence" value="ECO:0000314"/>
    <property type="project" value="dictyBase"/>
</dbReference>
<dbReference type="GO" id="GO:0000146">
    <property type="term" value="F:microfilament motor activity"/>
    <property type="evidence" value="ECO:0000314"/>
    <property type="project" value="dictyBase"/>
</dbReference>
<dbReference type="GO" id="GO:0005547">
    <property type="term" value="F:phosphatidylinositol-3,4,5-trisphosphate binding"/>
    <property type="evidence" value="ECO:0000314"/>
    <property type="project" value="dictyBase"/>
</dbReference>
<dbReference type="GO" id="GO:0007015">
    <property type="term" value="P:actin filament organization"/>
    <property type="evidence" value="ECO:0000318"/>
    <property type="project" value="GO_Central"/>
</dbReference>
<dbReference type="GO" id="GO:0030041">
    <property type="term" value="P:actin filament polymerization"/>
    <property type="evidence" value="ECO:0000316"/>
    <property type="project" value="dictyBase"/>
</dbReference>
<dbReference type="GO" id="GO:0030048">
    <property type="term" value="P:actin filament-based movement"/>
    <property type="evidence" value="ECO:0000318"/>
    <property type="project" value="GO_Central"/>
</dbReference>
<dbReference type="GO" id="GO:0043327">
    <property type="term" value="P:chemotaxis to cAMP"/>
    <property type="evidence" value="ECO:0000316"/>
    <property type="project" value="dictyBase"/>
</dbReference>
<dbReference type="GO" id="GO:0006897">
    <property type="term" value="P:endocytosis"/>
    <property type="evidence" value="ECO:0000318"/>
    <property type="project" value="GO_Central"/>
</dbReference>
<dbReference type="GO" id="GO:0006909">
    <property type="term" value="P:phagocytosis"/>
    <property type="evidence" value="ECO:0000315"/>
    <property type="project" value="dictyBase"/>
</dbReference>
<dbReference type="GO" id="GO:0006911">
    <property type="term" value="P:phagocytosis, engulfment"/>
    <property type="evidence" value="ECO:0000316"/>
    <property type="project" value="dictyBase"/>
</dbReference>
<dbReference type="CDD" id="cd23767">
    <property type="entry name" value="IQCD"/>
    <property type="match status" value="1"/>
</dbReference>
<dbReference type="CDD" id="cd01378">
    <property type="entry name" value="MYSc_Myo1"/>
    <property type="match status" value="1"/>
</dbReference>
<dbReference type="FunFam" id="1.10.10.820:FF:000001">
    <property type="entry name" value="Myosin heavy chain"/>
    <property type="match status" value="1"/>
</dbReference>
<dbReference type="FunFam" id="1.20.120.720:FF:000028">
    <property type="entry name" value="Myosin IE heavy chain"/>
    <property type="match status" value="1"/>
</dbReference>
<dbReference type="FunFam" id="1.20.58.530:FF:000004">
    <property type="entry name" value="Unconventional myosin ID"/>
    <property type="match status" value="1"/>
</dbReference>
<dbReference type="Gene3D" id="1.10.10.820">
    <property type="match status" value="1"/>
</dbReference>
<dbReference type="Gene3D" id="1.20.5.190">
    <property type="match status" value="1"/>
</dbReference>
<dbReference type="Gene3D" id="1.20.58.530">
    <property type="match status" value="1"/>
</dbReference>
<dbReference type="Gene3D" id="6.20.240.20">
    <property type="match status" value="1"/>
</dbReference>
<dbReference type="Gene3D" id="3.40.850.10">
    <property type="entry name" value="Kinesin motor domain"/>
    <property type="match status" value="1"/>
</dbReference>
<dbReference type="Gene3D" id="1.20.120.720">
    <property type="entry name" value="Myosin VI head, motor domain, U50 subdomain"/>
    <property type="match status" value="1"/>
</dbReference>
<dbReference type="InterPro" id="IPR000048">
    <property type="entry name" value="IQ_motif_EF-hand-BS"/>
</dbReference>
<dbReference type="InterPro" id="IPR036961">
    <property type="entry name" value="Kinesin_motor_dom_sf"/>
</dbReference>
<dbReference type="InterPro" id="IPR001609">
    <property type="entry name" value="Myosin_head_motor_dom-like"/>
</dbReference>
<dbReference type="InterPro" id="IPR010926">
    <property type="entry name" value="Myosin_TH1"/>
</dbReference>
<dbReference type="InterPro" id="IPR036072">
    <property type="entry name" value="MYSc_Myo1"/>
</dbReference>
<dbReference type="InterPro" id="IPR027417">
    <property type="entry name" value="P-loop_NTPase"/>
</dbReference>
<dbReference type="PANTHER" id="PTHR13140">
    <property type="entry name" value="MYOSIN"/>
    <property type="match status" value="1"/>
</dbReference>
<dbReference type="PANTHER" id="PTHR13140:SF679">
    <property type="entry name" value="UNCONVENTIONAL MYOSIN IC"/>
    <property type="match status" value="1"/>
</dbReference>
<dbReference type="Pfam" id="PF00612">
    <property type="entry name" value="IQ"/>
    <property type="match status" value="2"/>
</dbReference>
<dbReference type="Pfam" id="PF00063">
    <property type="entry name" value="Myosin_head"/>
    <property type="match status" value="1"/>
</dbReference>
<dbReference type="Pfam" id="PF06017">
    <property type="entry name" value="Myosin_TH1"/>
    <property type="match status" value="1"/>
</dbReference>
<dbReference type="PRINTS" id="PR00193">
    <property type="entry name" value="MYOSINHEAVY"/>
</dbReference>
<dbReference type="SMART" id="SM00015">
    <property type="entry name" value="IQ"/>
    <property type="match status" value="1"/>
</dbReference>
<dbReference type="SMART" id="SM00242">
    <property type="entry name" value="MYSc"/>
    <property type="match status" value="1"/>
</dbReference>
<dbReference type="SUPFAM" id="SSF52540">
    <property type="entry name" value="P-loop containing nucleoside triphosphate hydrolases"/>
    <property type="match status" value="1"/>
</dbReference>
<dbReference type="PROSITE" id="PS50096">
    <property type="entry name" value="IQ"/>
    <property type="match status" value="2"/>
</dbReference>
<dbReference type="PROSITE" id="PS51456">
    <property type="entry name" value="MYOSIN_MOTOR"/>
    <property type="match status" value="1"/>
</dbReference>
<dbReference type="PROSITE" id="PS51757">
    <property type="entry name" value="TH1"/>
    <property type="match status" value="1"/>
</dbReference>
<keyword id="KW-0002">3D-structure</keyword>
<keyword id="KW-0009">Actin-binding</keyword>
<keyword id="KW-0067">ATP-binding</keyword>
<keyword id="KW-0112">Calmodulin-binding</keyword>
<keyword id="KW-0505">Motor protein</keyword>
<keyword id="KW-0518">Myosin</keyword>
<keyword id="KW-0547">Nucleotide-binding</keyword>
<keyword id="KW-1185">Reference proteome</keyword>
<keyword id="KW-0677">Repeat</keyword>
<accession>Q03479</accession>
<accession>Q54IK6</accession>
<name>MYOE_DICDI</name>
<sequence>MIPKTKAEGVPDFVLLNQITENAFIENLTMRHKSDNIYTYIGDVVISTNPFKNLNIYKESDIKAYNGRYKYEMPPHIYALANDAYRSMRQSQENQCVIISGESGAGKTEASKKIMQFLTFVSSNQSPNGERISKMLLDSNPLLEAFGNAKTLRNDNSSRFGKYMEMQFNAVGSPIGGKITNYLLEKSRVVGRTQGERSFHIFYQMLKGLSQSKLNELGLTPNAPAYEYLKKSGCFDVSTIDDSGEFKIIVKAMETLGLKESDQNSIWRILAAILHIGNITFAEAAEQRTGTTTVKVSDTKSLAAAASCLKTDQQSLSIALCYRSISTGVGKRCSVISVPMDCNQAAYSRDALAKALYERLFNWLVSKINTIINCTTEKGPVIGILDIYGFEVFQNNSFEQLNINFCNEKLQQLFIELTLKSEQEEYVREGIEWKNIEYFNNKPICELIEKKPIGLISLLDEACLIAKSTDQTFLDSICKQFEKNPHLQSYVVSKDRSIGDTCFRLKHYAGDVTYDVRGFLDKNKDTLFGDLISSMQSSSDPLVQGLFPPTRPEDSKKRPETAGSQFRNAMNALITTLLACSPHYVRCIKSNDNKQAGVIDEDRVRHQVRYLGLLENVRVRRAGFAGRIEYTRFYNRYKMLCKKTWPSFNGTAKQATELILQQHNIDKEEIRMGKTKVFIRNPTTLFYFEEKRELEMPRIVTLIQKTWRGYRARSKWNQRKAAIKIQLFYRSYRYKKWFRELHRAFKDVARDPQWGKQVFWPKHPSILDRAVQLTHKIHNCWRAEKMILSLGAGQNHMRQKVMAYDIFHGKKKWDFRRHFDADYLEKPSNPNQQKYVLAMQNLFSTYGDTEVLFADYVIKVNPKGVPQRRGIVVTGTNIYKHDPKNYKVKKWGTPLVDVTSISISPMADTFLVLHCKAPQRDFVLDLGCNGYEAVSEITTVIVQQVLKLTGVKLSVQFTSSITYNNARPKGSDTILTFAPINNDPKLIGSQFKKGKGNQATIQFKD</sequence>
<comment type="function">
    <text>Myosin is a protein that binds to actin and has ATPase activity that is activated by actin. May play a role in moving membranes relative to actin.</text>
</comment>
<comment type="subunit">
    <text>Myosin I heavy chain is single-headed. Dimer of a heavy and a light chain. Inability to self-assemble into filaments.</text>
</comment>
<comment type="similarity">
    <text evidence="5">Belongs to the TRAFAC class myosin-kinesin ATPase superfamily. Myosin family.</text>
</comment>
<comment type="sequence caution" evidence="5">
    <conflict type="frameshift">
        <sequence resource="EMBL-CDS" id="AAA33201"/>
    </conflict>
</comment>
<organism>
    <name type="scientific">Dictyostelium discoideum</name>
    <name type="common">Social amoeba</name>
    <dbReference type="NCBI Taxonomy" id="44689"/>
    <lineage>
        <taxon>Eukaryota</taxon>
        <taxon>Amoebozoa</taxon>
        <taxon>Evosea</taxon>
        <taxon>Eumycetozoa</taxon>
        <taxon>Dictyostelia</taxon>
        <taxon>Dictyosteliales</taxon>
        <taxon>Dictyosteliaceae</taxon>
        <taxon>Dictyostelium</taxon>
    </lineage>
</organism>
<proteinExistence type="evidence at protein level"/>
<feature type="chain" id="PRO_0000123369" description="Myosin IE heavy chain">
    <location>
        <begin position="1"/>
        <end position="1005"/>
    </location>
</feature>
<feature type="domain" description="Myosin motor" evidence="2">
    <location>
        <begin position="8"/>
        <end position="693"/>
    </location>
</feature>
<feature type="domain" description="IQ 1" evidence="1">
    <location>
        <begin position="694"/>
        <end position="722"/>
    </location>
</feature>
<feature type="domain" description="IQ 2" evidence="1">
    <location>
        <begin position="716"/>
        <end position="745"/>
    </location>
</feature>
<feature type="domain" description="TH1" evidence="3">
    <location>
        <begin position="810"/>
        <end position="1004"/>
    </location>
</feature>
<feature type="region of interest" description="Disordered" evidence="4">
    <location>
        <begin position="539"/>
        <end position="562"/>
    </location>
</feature>
<feature type="region of interest" description="Actin-binding">
    <location>
        <begin position="556"/>
        <end position="630"/>
    </location>
</feature>
<feature type="compositionally biased region" description="Basic and acidic residues" evidence="4">
    <location>
        <begin position="551"/>
        <end position="560"/>
    </location>
</feature>
<feature type="binding site">
    <location>
        <begin position="101"/>
        <end position="108"/>
    </location>
    <ligand>
        <name>ATP</name>
        <dbReference type="ChEBI" id="CHEBI:30616"/>
    </ligand>
</feature>
<feature type="sequence conflict" description="In Ref. 1; AAA33201." evidence="5" ref="1">
    <original>E</original>
    <variation>D</variation>
    <location>
        <position position="26"/>
    </location>
</feature>
<feature type="sequence conflict" description="In Ref. 1; AAA33201." evidence="5" ref="1">
    <original>T</original>
    <variation>R</variation>
    <location>
        <position position="48"/>
    </location>
</feature>
<feature type="sequence conflict" description="In Ref. 1; AAA33201." evidence="5" ref="1">
    <original>VRE</original>
    <variation>K</variation>
    <location>
        <begin position="427"/>
        <end position="429"/>
    </location>
</feature>
<feature type="sequence conflict" description="In Ref. 1; AAA33201." evidence="5" ref="1">
    <location>
        <position position="440"/>
    </location>
</feature>
<feature type="sequence conflict" description="In Ref. 1; AAA33201." evidence="5" ref="1">
    <original>I</original>
    <variation>N</variation>
    <location>
        <position position="498"/>
    </location>
</feature>
<feature type="sequence conflict" description="In Ref. 1; AAA33201." evidence="5" ref="1">
    <original>V</original>
    <variation>D</variation>
    <location>
        <position position="604"/>
    </location>
</feature>
<feature type="sequence conflict" description="In Ref. 1; AAA33201." evidence="5" ref="1">
    <original>NPT</original>
    <variation>IPR</variation>
    <location>
        <begin position="681"/>
        <end position="683"/>
    </location>
</feature>
<feature type="sequence conflict" description="In Ref. 1; AAA33201." evidence="5" ref="1">
    <original>K</original>
    <variation>N</variation>
    <location>
        <position position="735"/>
    </location>
</feature>
<feature type="sequence conflict" description="In Ref. 1; AAA33201." evidence="5" ref="1">
    <original>H</original>
    <variation>D</variation>
    <location>
        <position position="763"/>
    </location>
</feature>
<feature type="sequence conflict" description="In Ref. 1; AAA33201." evidence="5" ref="1">
    <original>S</original>
    <variation>W</variation>
    <location>
        <position position="828"/>
    </location>
</feature>
<feature type="sequence conflict" description="In Ref. 1; AAA33201." evidence="5" ref="1">
    <original>K</original>
    <variation>N</variation>
    <location>
        <position position="889"/>
    </location>
</feature>
<feature type="sequence conflict" description="In Ref. 1; AAA33201." evidence="5" ref="1">
    <original>NQ</original>
    <variation>KE</variation>
    <location>
        <begin position="997"/>
        <end position="998"/>
    </location>
</feature>
<feature type="helix" evidence="6">
    <location>
        <begin position="13"/>
        <end position="15"/>
    </location>
</feature>
<feature type="helix" evidence="6">
    <location>
        <begin position="21"/>
        <end position="33"/>
    </location>
</feature>
<feature type="strand" evidence="6">
    <location>
        <begin position="38"/>
        <end position="43"/>
    </location>
</feature>
<feature type="strand" evidence="6">
    <location>
        <begin position="45"/>
        <end position="48"/>
    </location>
</feature>
<feature type="helix" evidence="6">
    <location>
        <begin position="59"/>
        <end position="65"/>
    </location>
</feature>
<feature type="helix" evidence="6">
    <location>
        <begin position="70"/>
        <end position="72"/>
    </location>
</feature>
<feature type="helix" evidence="6">
    <location>
        <begin position="77"/>
        <end position="91"/>
    </location>
</feature>
<feature type="strand" evidence="6">
    <location>
        <begin position="95"/>
        <end position="100"/>
    </location>
</feature>
<feature type="helix" evidence="6">
    <location>
        <begin position="107"/>
        <end position="121"/>
    </location>
</feature>
<feature type="helix" evidence="6">
    <location>
        <begin position="127"/>
        <end position="147"/>
    </location>
</feature>
<feature type="strand" evidence="6">
    <location>
        <begin position="160"/>
        <end position="168"/>
    </location>
</feature>
<feature type="strand" evidence="6">
    <location>
        <begin position="174"/>
        <end position="182"/>
    </location>
</feature>
<feature type="helix" evidence="6">
    <location>
        <begin position="186"/>
        <end position="189"/>
    </location>
</feature>
<feature type="helix" evidence="6">
    <location>
        <begin position="200"/>
        <end position="206"/>
    </location>
</feature>
<feature type="helix" evidence="6">
    <location>
        <begin position="211"/>
        <end position="217"/>
    </location>
</feature>
<feature type="helix" evidence="6">
    <location>
        <begin position="223"/>
        <end position="225"/>
    </location>
</feature>
<feature type="helix" evidence="6">
    <location>
        <begin position="227"/>
        <end position="230"/>
    </location>
</feature>
<feature type="turn" evidence="6">
    <location>
        <begin position="231"/>
        <end position="233"/>
    </location>
</feature>
<feature type="helix" evidence="6">
    <location>
        <begin position="242"/>
        <end position="255"/>
    </location>
</feature>
<feature type="helix" evidence="6">
    <location>
        <begin position="260"/>
        <end position="276"/>
    </location>
</feature>
<feature type="strand" evidence="6">
    <location>
        <begin position="281"/>
        <end position="284"/>
    </location>
</feature>
<feature type="turn" evidence="6">
    <location>
        <begin position="288"/>
        <end position="290"/>
    </location>
</feature>
<feature type="strand" evidence="6">
    <location>
        <begin position="293"/>
        <end position="298"/>
    </location>
</feature>
<feature type="helix" evidence="6">
    <location>
        <begin position="299"/>
        <end position="309"/>
    </location>
</feature>
<feature type="helix" evidence="6">
    <location>
        <begin position="313"/>
        <end position="321"/>
    </location>
</feature>
<feature type="helix" evidence="6">
    <location>
        <begin position="342"/>
        <end position="372"/>
    </location>
</feature>
<feature type="strand" evidence="6">
    <location>
        <begin position="381"/>
        <end position="386"/>
    </location>
</feature>
<feature type="strand" evidence="6">
    <location>
        <begin position="394"/>
        <end position="396"/>
    </location>
</feature>
<feature type="helix" evidence="6">
    <location>
        <begin position="398"/>
        <end position="418"/>
    </location>
</feature>
<feature type="helix" evidence="6">
    <location>
        <begin position="420"/>
        <end position="428"/>
    </location>
</feature>
<feature type="helix" evidence="6">
    <location>
        <begin position="443"/>
        <end position="447"/>
    </location>
</feature>
<feature type="strand" evidence="6">
    <location>
        <begin position="450"/>
        <end position="454"/>
    </location>
</feature>
<feature type="helix" evidence="6">
    <location>
        <begin position="455"/>
        <end position="464"/>
    </location>
</feature>
<feature type="helix" evidence="6">
    <location>
        <begin position="470"/>
        <end position="480"/>
    </location>
</feature>
<feature type="strand" evidence="6">
    <location>
        <begin position="481"/>
        <end position="484"/>
    </location>
</feature>
<feature type="turn" evidence="6">
    <location>
        <begin position="490"/>
        <end position="492"/>
    </location>
</feature>
<feature type="strand" evidence="6">
    <location>
        <begin position="502"/>
        <end position="507"/>
    </location>
</feature>
<feature type="strand" evidence="6">
    <location>
        <begin position="510"/>
        <end position="515"/>
    </location>
</feature>
<feature type="helix" evidence="6">
    <location>
        <begin position="519"/>
        <end position="524"/>
    </location>
</feature>
<feature type="helix" evidence="6">
    <location>
        <begin position="529"/>
        <end position="536"/>
    </location>
</feature>
<feature type="helix" evidence="6">
    <location>
        <begin position="541"/>
        <end position="546"/>
    </location>
</feature>
<feature type="helix" evidence="6">
    <location>
        <begin position="562"/>
        <end position="577"/>
    </location>
</feature>
<feature type="strand" evidence="6">
    <location>
        <begin position="580"/>
        <end position="588"/>
    </location>
</feature>
<feature type="helix" evidence="6">
    <location>
        <begin position="601"/>
        <end position="610"/>
    </location>
</feature>
<feature type="helix" evidence="6">
    <location>
        <begin position="614"/>
        <end position="622"/>
    </location>
</feature>
<feature type="helix" evidence="6">
    <location>
        <begin position="631"/>
        <end position="634"/>
    </location>
</feature>
<feature type="strand" evidence="6">
    <location>
        <begin position="639"/>
        <end position="641"/>
    </location>
</feature>
<feature type="helix" evidence="6">
    <location>
        <begin position="654"/>
        <end position="661"/>
    </location>
</feature>
<feature type="helix" evidence="6">
    <location>
        <begin position="667"/>
        <end position="669"/>
    </location>
</feature>
<feature type="strand" evidence="6">
    <location>
        <begin position="670"/>
        <end position="672"/>
    </location>
</feature>
<feature type="strand" evidence="6">
    <location>
        <begin position="674"/>
        <end position="682"/>
    </location>
</feature>
<feature type="helix" evidence="6">
    <location>
        <begin position="683"/>
        <end position="689"/>
    </location>
</feature>
<protein>
    <recommendedName>
        <fullName>Myosin IE heavy chain</fullName>
    </recommendedName>
</protein>
<gene>
    <name type="primary">myoE</name>
    <name type="synonym">dmiE</name>
    <name type="ORF">DDB_G0288679</name>
</gene>
<evidence type="ECO:0000255" key="1">
    <source>
        <dbReference type="PROSITE-ProRule" id="PRU00116"/>
    </source>
</evidence>
<evidence type="ECO:0000255" key="2">
    <source>
        <dbReference type="PROSITE-ProRule" id="PRU00782"/>
    </source>
</evidence>
<evidence type="ECO:0000255" key="3">
    <source>
        <dbReference type="PROSITE-ProRule" id="PRU01093"/>
    </source>
</evidence>
<evidence type="ECO:0000256" key="4">
    <source>
        <dbReference type="SAM" id="MobiDB-lite"/>
    </source>
</evidence>
<evidence type="ECO:0000305" key="5"/>
<evidence type="ECO:0007829" key="6">
    <source>
        <dbReference type="PDB" id="1LKX"/>
    </source>
</evidence>
<reference key="1">
    <citation type="journal article" date="1993" name="Biochim. Biophys. Acta">
        <title>The Dictyostelium myosin IE heavy chain gene encodes a truncated isoform that lacks sequences corresponding to the actin binding site in the tail.</title>
        <authorList>
            <person name="Urrutia R."/>
            <person name="Jung G."/>
            <person name="Hammer J.A. III"/>
        </authorList>
    </citation>
    <scope>NUCLEOTIDE SEQUENCE [GENOMIC DNA]</scope>
    <source>
        <strain>AX3</strain>
    </source>
</reference>
<reference key="2">
    <citation type="journal article" date="2005" name="Nature">
        <title>The genome of the social amoeba Dictyostelium discoideum.</title>
        <authorList>
            <person name="Eichinger L."/>
            <person name="Pachebat J.A."/>
            <person name="Gloeckner G."/>
            <person name="Rajandream M.A."/>
            <person name="Sucgang R."/>
            <person name="Berriman M."/>
            <person name="Song J."/>
            <person name="Olsen R."/>
            <person name="Szafranski K."/>
            <person name="Xu Q."/>
            <person name="Tunggal B."/>
            <person name="Kummerfeld S."/>
            <person name="Madera M."/>
            <person name="Konfortov B.A."/>
            <person name="Rivero F."/>
            <person name="Bankier A.T."/>
            <person name="Lehmann R."/>
            <person name="Hamlin N."/>
            <person name="Davies R."/>
            <person name="Gaudet P."/>
            <person name="Fey P."/>
            <person name="Pilcher K."/>
            <person name="Chen G."/>
            <person name="Saunders D."/>
            <person name="Sodergren E.J."/>
            <person name="Davis P."/>
            <person name="Kerhornou A."/>
            <person name="Nie X."/>
            <person name="Hall N."/>
            <person name="Anjard C."/>
            <person name="Hemphill L."/>
            <person name="Bason N."/>
            <person name="Farbrother P."/>
            <person name="Desany B."/>
            <person name="Just E."/>
            <person name="Morio T."/>
            <person name="Rost R."/>
            <person name="Churcher C.M."/>
            <person name="Cooper J."/>
            <person name="Haydock S."/>
            <person name="van Driessche N."/>
            <person name="Cronin A."/>
            <person name="Goodhead I."/>
            <person name="Muzny D.M."/>
            <person name="Mourier T."/>
            <person name="Pain A."/>
            <person name="Lu M."/>
            <person name="Harper D."/>
            <person name="Lindsay R."/>
            <person name="Hauser H."/>
            <person name="James K.D."/>
            <person name="Quiles M."/>
            <person name="Madan Babu M."/>
            <person name="Saito T."/>
            <person name="Buchrieser C."/>
            <person name="Wardroper A."/>
            <person name="Felder M."/>
            <person name="Thangavelu M."/>
            <person name="Johnson D."/>
            <person name="Knights A."/>
            <person name="Loulseged H."/>
            <person name="Mungall K.L."/>
            <person name="Oliver K."/>
            <person name="Price C."/>
            <person name="Quail M.A."/>
            <person name="Urushihara H."/>
            <person name="Hernandez J."/>
            <person name="Rabbinowitsch E."/>
            <person name="Steffen D."/>
            <person name="Sanders M."/>
            <person name="Ma J."/>
            <person name="Kohara Y."/>
            <person name="Sharp S."/>
            <person name="Simmonds M.N."/>
            <person name="Spiegler S."/>
            <person name="Tivey A."/>
            <person name="Sugano S."/>
            <person name="White B."/>
            <person name="Walker D."/>
            <person name="Woodward J.R."/>
            <person name="Winckler T."/>
            <person name="Tanaka Y."/>
            <person name="Shaulsky G."/>
            <person name="Schleicher M."/>
            <person name="Weinstock G.M."/>
            <person name="Rosenthal A."/>
            <person name="Cox E.C."/>
            <person name="Chisholm R.L."/>
            <person name="Gibbs R.A."/>
            <person name="Loomis W.F."/>
            <person name="Platzer M."/>
            <person name="Kay R.R."/>
            <person name="Williams J.G."/>
            <person name="Dear P.H."/>
            <person name="Noegel A.A."/>
            <person name="Barrell B.G."/>
            <person name="Kuspa A."/>
        </authorList>
    </citation>
    <scope>NUCLEOTIDE SEQUENCE [LARGE SCALE GENOMIC DNA]</scope>
    <source>
        <strain>AX4</strain>
    </source>
</reference>
<reference key="3">
    <citation type="journal article" date="2006" name="BMC Genomics">
        <title>Thirteen is enough: the myosins of Dictyostelium discoideum and their light chains.</title>
        <authorList>
            <person name="Kollmar M."/>
        </authorList>
    </citation>
    <scope>NOMENCLATURE</scope>
</reference>
<reference key="4">
    <citation type="journal article" date="2002" name="EMBO J.">
        <title>Crystal structure of the motor domain of a class-I myosin.</title>
        <authorList>
            <person name="Kollmar M."/>
            <person name="Duerrwang U."/>
            <person name="Kliche W."/>
            <person name="Manstein D.J."/>
            <person name="Kull F.J."/>
        </authorList>
    </citation>
    <scope>X-RAY CRYSTALLOGRAPHY (3.0 ANGSTROMS) OF 1-695</scope>
</reference>